<proteinExistence type="inferred from homology"/>
<feature type="chain" id="PRO_0000208277" description="L-rhamnose-proton symporter">
    <location>
        <begin position="1"/>
        <end position="344"/>
    </location>
</feature>
<feature type="transmembrane region" description="Helical" evidence="1">
    <location>
        <begin position="4"/>
        <end position="24"/>
    </location>
</feature>
<feature type="transmembrane region" description="Helical" evidence="1">
    <location>
        <begin position="38"/>
        <end position="58"/>
    </location>
</feature>
<feature type="transmembrane region" description="Helical" evidence="1">
    <location>
        <begin position="68"/>
        <end position="88"/>
    </location>
</feature>
<feature type="transmembrane region" description="Helical" evidence="1">
    <location>
        <begin position="101"/>
        <end position="121"/>
    </location>
</feature>
<feature type="transmembrane region" description="Helical" evidence="1">
    <location>
        <begin position="137"/>
        <end position="157"/>
    </location>
</feature>
<feature type="transmembrane region" description="Helical" evidence="1">
    <location>
        <begin position="175"/>
        <end position="195"/>
    </location>
</feature>
<feature type="transmembrane region" description="Helical" evidence="1">
    <location>
        <begin position="214"/>
        <end position="234"/>
    </location>
</feature>
<feature type="transmembrane region" description="Helical" evidence="1">
    <location>
        <begin position="259"/>
        <end position="279"/>
    </location>
</feature>
<feature type="transmembrane region" description="Helical" evidence="1">
    <location>
        <begin position="290"/>
        <end position="310"/>
    </location>
</feature>
<feature type="transmembrane region" description="Helical" evidence="1">
    <location>
        <begin position="321"/>
        <end position="341"/>
    </location>
</feature>
<sequence>MSNAITMGIFWHLIGAASAACFYAPFKQVKQWSWETMWSVGGIVSWLILPWTISALLLPDFWAYYGQFNLSTLLPVFLFGAMWGIGNINYGLTMRYLGMSMGIGIAIGITLIVGTLMTPIINGNFDVLIHTEGGRMTLLGVFVALIGVGIVTRAGQLKERKMGIKAEEFNLKKGLLLAVMCGIFSAGMSFAMNAAKPMHEAAAALGVDPLYVALPSYVVIMGGGALVNLGFCFIRLAKVQNLSIKADFSLARPLIISNILLSALGGLMWYLQFFFYAWGHARIPAQYDYMSWMLHMSFYVLCGGLVGLVLKEWKNAGRRPVAVLSLGCVVIIIAANIVGLGMAS</sequence>
<comment type="function">
    <text evidence="1">Uptake of L-rhamnose across the cytoplasmic membrane with the concomitant transport of protons into the cell (symport system).</text>
</comment>
<comment type="catalytic activity">
    <reaction evidence="1">
        <text>L-rhamnopyranose(in) + H(+)(in) = L-rhamnopyranose(out) + H(+)(out)</text>
        <dbReference type="Rhea" id="RHEA:29947"/>
        <dbReference type="ChEBI" id="CHEBI:15378"/>
        <dbReference type="ChEBI" id="CHEBI:62346"/>
    </reaction>
    <physiologicalReaction direction="right-to-left" evidence="1">
        <dbReference type="Rhea" id="RHEA:29949"/>
    </physiologicalReaction>
</comment>
<comment type="subcellular location">
    <subcellularLocation>
        <location evidence="1">Cell inner membrane</location>
        <topology evidence="1">Multi-pass membrane protein</topology>
    </subcellularLocation>
</comment>
<comment type="similarity">
    <text evidence="1">Belongs to the L-rhamnose transporter (TC 2.A.7.6) family.</text>
</comment>
<accession>Q57HG6</accession>
<name>RHAT_SALCH</name>
<protein>
    <recommendedName>
        <fullName evidence="1">L-rhamnose-proton symporter</fullName>
    </recommendedName>
    <alternativeName>
        <fullName evidence="1">L-rhamnose-H(+) transport protein</fullName>
    </alternativeName>
</protein>
<keyword id="KW-0997">Cell inner membrane</keyword>
<keyword id="KW-1003">Cell membrane</keyword>
<keyword id="KW-0472">Membrane</keyword>
<keyword id="KW-0762">Sugar transport</keyword>
<keyword id="KW-0769">Symport</keyword>
<keyword id="KW-0812">Transmembrane</keyword>
<keyword id="KW-1133">Transmembrane helix</keyword>
<keyword id="KW-0813">Transport</keyword>
<gene>
    <name evidence="1" type="primary">rhaT</name>
    <name type="ordered locus">SCH_3940</name>
</gene>
<organism>
    <name type="scientific">Salmonella choleraesuis (strain SC-B67)</name>
    <dbReference type="NCBI Taxonomy" id="321314"/>
    <lineage>
        <taxon>Bacteria</taxon>
        <taxon>Pseudomonadati</taxon>
        <taxon>Pseudomonadota</taxon>
        <taxon>Gammaproteobacteria</taxon>
        <taxon>Enterobacterales</taxon>
        <taxon>Enterobacteriaceae</taxon>
        <taxon>Salmonella</taxon>
    </lineage>
</organism>
<reference key="1">
    <citation type="journal article" date="2005" name="Nucleic Acids Res.">
        <title>The genome sequence of Salmonella enterica serovar Choleraesuis, a highly invasive and resistant zoonotic pathogen.</title>
        <authorList>
            <person name="Chiu C.-H."/>
            <person name="Tang P."/>
            <person name="Chu C."/>
            <person name="Hu S."/>
            <person name="Bao Q."/>
            <person name="Yu J."/>
            <person name="Chou Y.-Y."/>
            <person name="Wang H.-S."/>
            <person name="Lee Y.-S."/>
        </authorList>
    </citation>
    <scope>NUCLEOTIDE SEQUENCE [LARGE SCALE GENOMIC DNA]</scope>
    <source>
        <strain>SC-B67</strain>
    </source>
</reference>
<dbReference type="EMBL" id="AE017220">
    <property type="protein sequence ID" value="AAX67846.1"/>
    <property type="molecule type" value="Genomic_DNA"/>
</dbReference>
<dbReference type="RefSeq" id="WP_000063541.1">
    <property type="nucleotide sequence ID" value="NC_006905.1"/>
</dbReference>
<dbReference type="KEGG" id="sec:SCH_3940"/>
<dbReference type="HOGENOM" id="CLU_066437_0_0_6"/>
<dbReference type="Proteomes" id="UP000000538">
    <property type="component" value="Chromosome"/>
</dbReference>
<dbReference type="GO" id="GO:0005886">
    <property type="term" value="C:plasma membrane"/>
    <property type="evidence" value="ECO:0007669"/>
    <property type="project" value="UniProtKB-SubCell"/>
</dbReference>
<dbReference type="GO" id="GO:0015153">
    <property type="term" value="F:rhamnose transmembrane transporter activity"/>
    <property type="evidence" value="ECO:0007669"/>
    <property type="project" value="UniProtKB-UniRule"/>
</dbReference>
<dbReference type="GO" id="GO:0015293">
    <property type="term" value="F:symporter activity"/>
    <property type="evidence" value="ECO:0007669"/>
    <property type="project" value="UniProtKB-KW"/>
</dbReference>
<dbReference type="HAMAP" id="MF_01532">
    <property type="entry name" value="RhaT"/>
    <property type="match status" value="1"/>
</dbReference>
<dbReference type="InterPro" id="IPR004673">
    <property type="entry name" value="L-rhamnose-proton_sym_RhaT"/>
</dbReference>
<dbReference type="NCBIfam" id="NF010021">
    <property type="entry name" value="PRK13499.1-1"/>
    <property type="match status" value="1"/>
</dbReference>
<dbReference type="NCBIfam" id="NF010023">
    <property type="entry name" value="PRK13499.1-3"/>
    <property type="match status" value="1"/>
</dbReference>
<dbReference type="NCBIfam" id="TIGR00776">
    <property type="entry name" value="RhaT"/>
    <property type="match status" value="1"/>
</dbReference>
<dbReference type="Pfam" id="PF06379">
    <property type="entry name" value="RhaT"/>
    <property type="match status" value="1"/>
</dbReference>
<evidence type="ECO:0000255" key="1">
    <source>
        <dbReference type="HAMAP-Rule" id="MF_01532"/>
    </source>
</evidence>